<reference key="1">
    <citation type="journal article" date="1994" name="Mol. Microbiol.">
        <title>Cellobiohydrolase A (CbhA) from the cellulolytic bacterium Cellulomonas fimi is a beta-1,4-exocellobiohydrolase analogous to Trichoderma reesei CBH II.</title>
        <authorList>
            <person name="Meinke A."/>
            <person name="Gilkes N.R."/>
            <person name="Kwan E."/>
            <person name="Kilburn D.G."/>
            <person name="Warren R.A.J."/>
            <person name="Miller R.C. Jr."/>
        </authorList>
    </citation>
    <scope>NUCLEOTIDE SEQUENCE [GENOMIC DNA]</scope>
    <source>
        <strain>ATCC 484 / DSM 20113 / JCM 1341 / CCUG 24087 / LMG 16345 / NBRC 15513 / NCIMB 8980 / NCTC 7547 / NRS-133</strain>
    </source>
</reference>
<reference key="2">
    <citation type="submission" date="2011-04" db="EMBL/GenBank/DDBJ databases">
        <title>Complete sequence of Cellulomonas fimi ATCC 484.</title>
        <authorList>
            <consortium name="US DOE Joint Genome Institute"/>
            <person name="Lucas S."/>
            <person name="Han J."/>
            <person name="Lapidus A."/>
            <person name="Cheng J.-F."/>
            <person name="Goodwin L."/>
            <person name="Pitluck S."/>
            <person name="Peters L."/>
            <person name="Chertkov O."/>
            <person name="Detter J.C."/>
            <person name="Han C."/>
            <person name="Tapia R."/>
            <person name="Land M."/>
            <person name="Hauser L."/>
            <person name="Kyrpides N."/>
            <person name="Ivanova N."/>
            <person name="Ovchinnikova G."/>
            <person name="Pagani I."/>
            <person name="Mead D."/>
            <person name="Brumm P."/>
            <person name="Woyke T."/>
        </authorList>
    </citation>
    <scope>NUCLEOTIDE SEQUENCE [LARGE SCALE GENOMIC DNA]</scope>
    <source>
        <strain>ATCC 484 / DSM 20113 / JCM 1341 / CCUG 24087 / LMG 16345 / NBRC 15513 / NCIMB 8980 / NCTC 7547 / NRS-133</strain>
    </source>
</reference>
<reference key="3">
    <citation type="journal article" date="1993" name="J. Bacteriol.">
        <title>Cellulose-binding polypeptides from Cellulomonas fimi: endoglucanase D (CenD), a family A beta-1,4-glucanase.</title>
        <authorList>
            <person name="Meinke A."/>
            <person name="Gilkes N.R."/>
            <person name="Kilburn D.G."/>
            <person name="Miller R.C. Jr."/>
            <person name="Warren R.A.J."/>
        </authorList>
    </citation>
    <scope>PROTEIN SEQUENCE OF 41-58</scope>
    <source>
        <strain>ATCC 484 / DSM 20113 / JCM 1341 / CCUG 24087 / LMG 16345 / NBRC 15513 / NCIMB 8980 / NCTC 7547 / NRS-133</strain>
    </source>
</reference>
<organism>
    <name type="scientific">Cellulomonas fimi (strain ATCC 484 / DSM 20113 / JCM 1341 / CCUG 24087 / LMG 16345 / NBRC 15513 / NCIMB 8980 / NCTC 7547 / NRS-133)</name>
    <dbReference type="NCBI Taxonomy" id="590998"/>
    <lineage>
        <taxon>Bacteria</taxon>
        <taxon>Bacillati</taxon>
        <taxon>Actinomycetota</taxon>
        <taxon>Actinomycetes</taxon>
        <taxon>Micrococcales</taxon>
        <taxon>Cellulomonadaceae</taxon>
        <taxon>Cellulomonas</taxon>
    </lineage>
</organism>
<gene>
    <name type="primary">cbhA</name>
    <name type="ordered locus">Celf_1925</name>
</gene>
<protein>
    <recommendedName>
        <fullName>Exoglucanase A</fullName>
        <ecNumber>3.2.1.91</ecNumber>
    </recommendedName>
    <alternativeName>
        <fullName>1,4-beta-cellobiohydrolase A</fullName>
    </alternativeName>
    <alternativeName>
        <fullName>CBP95</fullName>
    </alternativeName>
    <alternativeName>
        <fullName>Exocellobiohydrolase A</fullName>
    </alternativeName>
</protein>
<dbReference type="EC" id="3.2.1.91"/>
<dbReference type="EMBL" id="L25809">
    <property type="protein sequence ID" value="AAC36898.1"/>
    <property type="molecule type" value="Unassigned_DNA"/>
</dbReference>
<dbReference type="EMBL" id="CP002666">
    <property type="protein sequence ID" value="AEE46055.1"/>
    <property type="molecule type" value="Genomic_DNA"/>
</dbReference>
<dbReference type="PIR" id="S49541">
    <property type="entry name" value="S49541"/>
</dbReference>
<dbReference type="RefSeq" id="WP_013771081.1">
    <property type="nucleotide sequence ID" value="NC_015514.1"/>
</dbReference>
<dbReference type="PDB" id="7CBD">
    <property type="method" value="X-ray"/>
    <property type="resolution" value="1.30 A"/>
    <property type="chains" value="A=41-483"/>
</dbReference>
<dbReference type="PDBsum" id="7CBD"/>
<dbReference type="SMR" id="P50401"/>
<dbReference type="STRING" id="590998.Celf_1925"/>
<dbReference type="CAZy" id="CBM2">
    <property type="family name" value="Carbohydrate-Binding Module Family 2"/>
</dbReference>
<dbReference type="CAZy" id="GH6">
    <property type="family name" value="Glycoside Hydrolase Family 6"/>
</dbReference>
<dbReference type="KEGG" id="cfi:Celf_1925"/>
<dbReference type="eggNOG" id="COG5297">
    <property type="taxonomic scope" value="Bacteria"/>
</dbReference>
<dbReference type="HOGENOM" id="CLU_015488_3_0_11"/>
<dbReference type="SABIO-RK" id="P50401"/>
<dbReference type="Proteomes" id="UP000008460">
    <property type="component" value="Chromosome"/>
</dbReference>
<dbReference type="GO" id="GO:0016162">
    <property type="term" value="F:cellulose 1,4-beta-cellobiosidase activity"/>
    <property type="evidence" value="ECO:0007669"/>
    <property type="project" value="UniProtKB-EC"/>
</dbReference>
<dbReference type="GO" id="GO:0030247">
    <property type="term" value="F:polysaccharide binding"/>
    <property type="evidence" value="ECO:0007669"/>
    <property type="project" value="InterPro"/>
</dbReference>
<dbReference type="GO" id="GO:0030245">
    <property type="term" value="P:cellulose catabolic process"/>
    <property type="evidence" value="ECO:0007669"/>
    <property type="project" value="UniProtKB-KW"/>
</dbReference>
<dbReference type="CDD" id="cd00063">
    <property type="entry name" value="FN3"/>
    <property type="match status" value="2"/>
</dbReference>
<dbReference type="FunFam" id="2.60.40.10:FF:001114">
    <property type="entry name" value="Chitinase A1"/>
    <property type="match status" value="1"/>
</dbReference>
<dbReference type="Gene3D" id="2.60.40.290">
    <property type="match status" value="1"/>
</dbReference>
<dbReference type="Gene3D" id="3.20.20.40">
    <property type="entry name" value="1, 4-beta cellobiohydrolase"/>
    <property type="match status" value="1"/>
</dbReference>
<dbReference type="Gene3D" id="2.60.40.10">
    <property type="entry name" value="Immunoglobulins"/>
    <property type="match status" value="3"/>
</dbReference>
<dbReference type="InterPro" id="IPR016288">
    <property type="entry name" value="Beta_cellobiohydrolase"/>
</dbReference>
<dbReference type="InterPro" id="IPR036434">
    <property type="entry name" value="Beta_cellobiohydrolase_sf"/>
</dbReference>
<dbReference type="InterPro" id="IPR001919">
    <property type="entry name" value="CBD2"/>
</dbReference>
<dbReference type="InterPro" id="IPR008965">
    <property type="entry name" value="CBM2/CBM3_carb-bd_dom_sf"/>
</dbReference>
<dbReference type="InterPro" id="IPR012291">
    <property type="entry name" value="CBM2_carb-bd_dom_sf"/>
</dbReference>
<dbReference type="InterPro" id="IPR018366">
    <property type="entry name" value="CBM2_CS"/>
</dbReference>
<dbReference type="InterPro" id="IPR003961">
    <property type="entry name" value="FN3_dom"/>
</dbReference>
<dbReference type="InterPro" id="IPR036116">
    <property type="entry name" value="FN3_sf"/>
</dbReference>
<dbReference type="InterPro" id="IPR001524">
    <property type="entry name" value="Glyco_hydro_6_CS"/>
</dbReference>
<dbReference type="InterPro" id="IPR013783">
    <property type="entry name" value="Ig-like_fold"/>
</dbReference>
<dbReference type="PANTHER" id="PTHR34876">
    <property type="match status" value="1"/>
</dbReference>
<dbReference type="PANTHER" id="PTHR34876:SF4">
    <property type="entry name" value="1,4-BETA-D-GLUCAN CELLOBIOHYDROLASE C-RELATED"/>
    <property type="match status" value="1"/>
</dbReference>
<dbReference type="Pfam" id="PF00553">
    <property type="entry name" value="CBM_2"/>
    <property type="match status" value="1"/>
</dbReference>
<dbReference type="Pfam" id="PF00041">
    <property type="entry name" value="fn3"/>
    <property type="match status" value="3"/>
</dbReference>
<dbReference type="Pfam" id="PF01341">
    <property type="entry name" value="Glyco_hydro_6"/>
    <property type="match status" value="1"/>
</dbReference>
<dbReference type="PRINTS" id="PR00733">
    <property type="entry name" value="GLHYDRLASE6"/>
</dbReference>
<dbReference type="SMART" id="SM00637">
    <property type="entry name" value="CBD_II"/>
    <property type="match status" value="1"/>
</dbReference>
<dbReference type="SMART" id="SM00060">
    <property type="entry name" value="FN3"/>
    <property type="match status" value="3"/>
</dbReference>
<dbReference type="SUPFAM" id="SSF49384">
    <property type="entry name" value="Carbohydrate-binding domain"/>
    <property type="match status" value="1"/>
</dbReference>
<dbReference type="SUPFAM" id="SSF49265">
    <property type="entry name" value="Fibronectin type III"/>
    <property type="match status" value="2"/>
</dbReference>
<dbReference type="SUPFAM" id="SSF51989">
    <property type="entry name" value="Glycosyl hydrolases family 6, cellulases"/>
    <property type="match status" value="1"/>
</dbReference>
<dbReference type="PROSITE" id="PS51173">
    <property type="entry name" value="CBM2"/>
    <property type="match status" value="1"/>
</dbReference>
<dbReference type="PROSITE" id="PS00561">
    <property type="entry name" value="CBM2_A"/>
    <property type="match status" value="1"/>
</dbReference>
<dbReference type="PROSITE" id="PS50853">
    <property type="entry name" value="FN3"/>
    <property type="match status" value="3"/>
</dbReference>
<dbReference type="PROSITE" id="PS00655">
    <property type="entry name" value="GLYCOSYL_HYDROL_F6_1"/>
    <property type="match status" value="1"/>
</dbReference>
<dbReference type="PROSITE" id="PS00656">
    <property type="entry name" value="GLYCOSYL_HYDROL_F6_2"/>
    <property type="match status" value="1"/>
</dbReference>
<sequence length="872" mass="89301">MSTLGKRAGVRRRVRAVATAATATALVAVPLTTLATSASAAPVHVDNPYAGAVQYVNPTWAASVNAAAGRQSADPALAAKMRTVAGQPTAVWMDRISAITGNADGNGLKFHLDNAVAQQKAAGVPLVFNLVIYDLPGRDCFALASNGELPATDAGLARYKSEYIDPIADLLDNPEYESIRIAATIEPDSLPNLTTNISEPACQQAAPYYRQGVKYALDKLHAIPNVYNYIDIGHSGWLGWDSNAGPSATLFAEVAKSTTAGFASIDGFVSDVANTTPLEEPLLSDSSLTINNTPIRSSKFYEWNFDFDEIDYTAHMHRLLVAAGFPSSIGMLVDTSRNGWGGPNRPTSITASTDVNAYVDANRVDRRVHRGAWCNPLGAGIGRFPEATPSGYAASHLDAFVWIKPPGESDGASTDIPNDQGKRFDRMCDPTFVSPKLNNQLTGATPNAPLAGQWFEEQFVTLVKNAYPVIGGTTPVEDLVAPTVPTGLTAGTTTATSVPLSWTASTDNVAVTGYDVYRGTTLVGTTAATSYTVTGLTPATAYSFTVRAKDAAGNVSAASAAAAATTQSGTVTDTTAPSVPAGLTAGTTTTTTVPLSWTASTDNAGGSGVAGYEVLRGTTVVGTTTATSYTVTGLTAGTTYSFSVRAKDVAGNTSAASAAVSATTQTGTVVDTTAPSVPTGLTAGTTTTSSVPLTWTASTDNAGGSGVAGYEVFNGTTRVATVTSTSYTVTGLAADTAYSFTVKAKDVAGNVSAASAAVSARTQAATSGGCTVKYSASSWNTGFTGTVEVKNNGTAALNGWTLGFSFADGQKVSQGWSAEWSQSGTAVTAKNAPWNGTLAAGSSVSIGFNGTHNGTNTAPTAFTLNGVACTLG</sequence>
<name>GUXA_CELFA</name>
<proteinExistence type="evidence at protein level"/>
<keyword id="KW-0002">3D-structure</keyword>
<keyword id="KW-0119">Carbohydrate metabolism</keyword>
<keyword id="KW-0136">Cellulose degradation</keyword>
<keyword id="KW-0903">Direct protein sequencing</keyword>
<keyword id="KW-1015">Disulfide bond</keyword>
<keyword id="KW-0326">Glycosidase</keyword>
<keyword id="KW-0378">Hydrolase</keyword>
<keyword id="KW-0624">Polysaccharide degradation</keyword>
<keyword id="KW-1185">Reference proteome</keyword>
<keyword id="KW-0677">Repeat</keyword>
<keyword id="KW-0732">Signal</keyword>
<accession>P50401</accession>
<accession>F4GZL1</accession>
<feature type="signal peptide" evidence="6">
    <location>
        <begin position="1"/>
        <end position="40"/>
    </location>
</feature>
<feature type="chain" id="PRO_0000007904" description="Exoglucanase A">
    <location>
        <begin position="41"/>
        <end position="872"/>
    </location>
</feature>
<feature type="domain" description="Fibronectin type-III 1" evidence="2">
    <location>
        <begin position="484"/>
        <end position="569"/>
    </location>
</feature>
<feature type="domain" description="Fibronectin type-III 2" evidence="2">
    <location>
        <begin position="579"/>
        <end position="667"/>
    </location>
</feature>
<feature type="domain" description="Fibronectin type-III 3" evidence="2">
    <location>
        <begin position="677"/>
        <end position="765"/>
    </location>
</feature>
<feature type="domain" description="CBM2" evidence="3">
    <location>
        <begin position="763"/>
        <end position="872"/>
    </location>
</feature>
<feature type="region of interest" description="Catalytic">
    <location>
        <begin position="41"/>
        <end position="477"/>
    </location>
</feature>
<feature type="active site" description="Proton donor" evidence="5">
    <location>
        <position position="188"/>
    </location>
</feature>
<feature type="active site" description="Nucleophile" evidence="4">
    <location>
        <position position="410"/>
    </location>
</feature>
<feature type="disulfide bond" evidence="1">
    <location>
        <begin position="140"/>
        <end position="202"/>
    </location>
</feature>
<feature type="disulfide bond" evidence="1">
    <location>
        <begin position="374"/>
        <end position="428"/>
    </location>
</feature>
<feature type="disulfide bond" evidence="1">
    <location>
        <begin position="770"/>
        <end position="869"/>
    </location>
</feature>
<feature type="turn" evidence="8">
    <location>
        <begin position="48"/>
        <end position="51"/>
    </location>
</feature>
<feature type="helix" evidence="8">
    <location>
        <begin position="58"/>
        <end position="69"/>
    </location>
</feature>
<feature type="turn" evidence="8">
    <location>
        <begin position="70"/>
        <end position="73"/>
    </location>
</feature>
<feature type="helix" evidence="8">
    <location>
        <begin position="75"/>
        <end position="84"/>
    </location>
</feature>
<feature type="strand" evidence="8">
    <location>
        <begin position="91"/>
        <end position="93"/>
    </location>
</feature>
<feature type="helix" evidence="8">
    <location>
        <begin position="96"/>
        <end position="98"/>
    </location>
</feature>
<feature type="helix" evidence="8">
    <location>
        <begin position="108"/>
        <end position="122"/>
    </location>
</feature>
<feature type="strand" evidence="8">
    <location>
        <begin position="126"/>
        <end position="132"/>
    </location>
</feature>
<feature type="strand" evidence="8">
    <location>
        <begin position="142"/>
        <end position="144"/>
    </location>
</feature>
<feature type="strand" evidence="8">
    <location>
        <begin position="147"/>
        <end position="149"/>
    </location>
</feature>
<feature type="helix" evidence="8">
    <location>
        <begin position="153"/>
        <end position="162"/>
    </location>
</feature>
<feature type="helix" evidence="8">
    <location>
        <begin position="164"/>
        <end position="171"/>
    </location>
</feature>
<feature type="helix" evidence="8">
    <location>
        <begin position="174"/>
        <end position="176"/>
    </location>
</feature>
<feature type="strand" evidence="8">
    <location>
        <begin position="179"/>
        <end position="185"/>
    </location>
</feature>
<feature type="helix" evidence="8">
    <location>
        <begin position="192"/>
        <end position="195"/>
    </location>
</feature>
<feature type="helix" evidence="8">
    <location>
        <begin position="200"/>
        <end position="221"/>
    </location>
</feature>
<feature type="strand" evidence="8">
    <location>
        <begin position="226"/>
        <end position="231"/>
    </location>
</feature>
<feature type="helix" evidence="8">
    <location>
        <begin position="235"/>
        <end position="238"/>
    </location>
</feature>
<feature type="helix" evidence="8">
    <location>
        <begin position="241"/>
        <end position="257"/>
    </location>
</feature>
<feature type="helix" evidence="8">
    <location>
        <begin position="261"/>
        <end position="264"/>
    </location>
</feature>
<feature type="strand" evidence="8">
    <location>
        <begin position="267"/>
        <end position="270"/>
    </location>
</feature>
<feature type="helix" evidence="8">
    <location>
        <begin position="295"/>
        <end position="297"/>
    </location>
</feature>
<feature type="turn" evidence="8">
    <location>
        <begin position="299"/>
        <end position="303"/>
    </location>
</feature>
<feature type="helix" evidence="8">
    <location>
        <begin position="309"/>
        <end position="322"/>
    </location>
</feature>
<feature type="strand" evidence="8">
    <location>
        <begin position="330"/>
        <end position="334"/>
    </location>
</feature>
<feature type="helix" evidence="8">
    <location>
        <begin position="355"/>
        <end position="362"/>
    </location>
</feature>
<feature type="strand" evidence="8">
    <location>
        <begin position="374"/>
        <end position="376"/>
    </location>
</feature>
<feature type="strand" evidence="8">
    <location>
        <begin position="386"/>
        <end position="388"/>
    </location>
</feature>
<feature type="helix" evidence="8">
    <location>
        <begin position="393"/>
        <end position="395"/>
    </location>
</feature>
<feature type="strand" evidence="8">
    <location>
        <begin position="397"/>
        <end position="402"/>
    </location>
</feature>
<feature type="helix" evidence="8">
    <location>
        <begin position="426"/>
        <end position="428"/>
    </location>
</feature>
<feature type="turn" evidence="8">
    <location>
        <begin position="435"/>
        <end position="438"/>
    </location>
</feature>
<feature type="strand" evidence="8">
    <location>
        <begin position="439"/>
        <end position="441"/>
    </location>
</feature>
<feature type="helix" evidence="8">
    <location>
        <begin position="456"/>
        <end position="464"/>
    </location>
</feature>
<feature type="helix" evidence="8">
    <location>
        <begin position="476"/>
        <end position="479"/>
    </location>
</feature>
<evidence type="ECO:0000250" key="1"/>
<evidence type="ECO:0000255" key="2">
    <source>
        <dbReference type="PROSITE-ProRule" id="PRU00316"/>
    </source>
</evidence>
<evidence type="ECO:0000255" key="3">
    <source>
        <dbReference type="PROSITE-ProRule" id="PRU01135"/>
    </source>
</evidence>
<evidence type="ECO:0000255" key="4">
    <source>
        <dbReference type="PROSITE-ProRule" id="PRU10056"/>
    </source>
</evidence>
<evidence type="ECO:0000255" key="5">
    <source>
        <dbReference type="PROSITE-ProRule" id="PRU10057"/>
    </source>
</evidence>
<evidence type="ECO:0000269" key="6">
    <source>
    </source>
</evidence>
<evidence type="ECO:0000305" key="7"/>
<evidence type="ECO:0007829" key="8">
    <source>
        <dbReference type="PDB" id="7CBD"/>
    </source>
</evidence>
<comment type="function">
    <text>This enzyme hydrolyzes 1,4-beta-D-glucosidic linkages of cellulose. Weak activity against carboxymethylcellulose, bacterial microcrystalline cellulose and barley beta-glucan. Also has weak endoglucanase activity. Hydrolyzes glucosidic bonds with inversion of anomeric configuration.</text>
</comment>
<comment type="catalytic activity">
    <reaction>
        <text>Hydrolysis of (1-&gt;4)-beta-D-glucosidic linkages in cellulose and cellotetraose, releasing cellobiose from the non-reducing ends of the chains.</text>
        <dbReference type="EC" id="3.2.1.91"/>
    </reaction>
</comment>
<comment type="similarity">
    <text evidence="7">Belongs to the glycosyl hydrolase 6 (cellulase B) family.</text>
</comment>